<sequence length="301" mass="33842">MHVLRTPDSRFENLEDYPFVAHYLDVTARDTRPLRMHYLDEGPIDGPPIVLLHGEPTWSYLYRTMITPLTDAGNRVLAPDLIGFGRSDKPSRIEDYSYQRHVDWVVSWFEHLNLSDVTLFVQDWGSLIGLRIAAEQPDRVGRLVVANGFLPTAQRRTPPAFYAWRAFARYSPVLPAGRIVSVGTVRRVSSKVRAGYDAPFPDKTYQAGARAFPQLVPTSPADPAIPANRKAWEALGRWEKPFLAIFGARDPILGHADSPLIKHIPGAAGQPHARINASHFIQEDRGPELAERILSWQQALL</sequence>
<dbReference type="EC" id="3.8.1.5" evidence="2"/>
<dbReference type="EMBL" id="AE016958">
    <property type="protein sequence ID" value="AAS04374.1"/>
    <property type="molecule type" value="Genomic_DNA"/>
</dbReference>
<dbReference type="RefSeq" id="WP_003872427.1">
    <property type="nucleotide sequence ID" value="NZ_CP106873.1"/>
</dbReference>
<dbReference type="SMR" id="Q73Y99"/>
<dbReference type="STRING" id="262316.MAP_2057"/>
<dbReference type="ESTHER" id="mycav-DHMA">
    <property type="family name" value="Haloalkane_dehalogenase-HLD1"/>
</dbReference>
<dbReference type="KEGG" id="mpa:MAP_2057"/>
<dbReference type="eggNOG" id="COG0596">
    <property type="taxonomic scope" value="Bacteria"/>
</dbReference>
<dbReference type="HOGENOM" id="CLU_020336_13_3_11"/>
<dbReference type="BRENDA" id="3.8.1.5">
    <property type="organism ID" value="3492"/>
</dbReference>
<dbReference type="Proteomes" id="UP000000580">
    <property type="component" value="Chromosome"/>
</dbReference>
<dbReference type="GO" id="GO:0004301">
    <property type="term" value="F:epoxide hydrolase activity"/>
    <property type="evidence" value="ECO:0007669"/>
    <property type="project" value="TreeGrafter"/>
</dbReference>
<dbReference type="GO" id="GO:0018786">
    <property type="term" value="F:haloalkane dehalogenase activity"/>
    <property type="evidence" value="ECO:0007669"/>
    <property type="project" value="UniProtKB-UniRule"/>
</dbReference>
<dbReference type="Gene3D" id="3.40.50.1820">
    <property type="entry name" value="alpha/beta hydrolase"/>
    <property type="match status" value="1"/>
</dbReference>
<dbReference type="HAMAP" id="MF_01230">
    <property type="entry name" value="Haloalk_dehal_type1"/>
    <property type="match status" value="1"/>
</dbReference>
<dbReference type="InterPro" id="IPR000073">
    <property type="entry name" value="AB_hydrolase_1"/>
</dbReference>
<dbReference type="InterPro" id="IPR029058">
    <property type="entry name" value="AB_hydrolase_fold"/>
</dbReference>
<dbReference type="InterPro" id="IPR000639">
    <property type="entry name" value="Epox_hydrolase-like"/>
</dbReference>
<dbReference type="InterPro" id="IPR051340">
    <property type="entry name" value="Haloalkane_dehalogenase"/>
</dbReference>
<dbReference type="InterPro" id="IPR023489">
    <property type="entry name" value="Haloalkane_dehalogenase_1"/>
</dbReference>
<dbReference type="NCBIfam" id="NF002043">
    <property type="entry name" value="PRK00870.1"/>
    <property type="match status" value="1"/>
</dbReference>
<dbReference type="PANTHER" id="PTHR42977:SF3">
    <property type="entry name" value="AB HYDROLASE-1 DOMAIN-CONTAINING PROTEIN"/>
    <property type="match status" value="1"/>
</dbReference>
<dbReference type="PANTHER" id="PTHR42977">
    <property type="entry name" value="HYDROLASE-RELATED"/>
    <property type="match status" value="1"/>
</dbReference>
<dbReference type="Pfam" id="PF00561">
    <property type="entry name" value="Abhydrolase_1"/>
    <property type="match status" value="1"/>
</dbReference>
<dbReference type="PRINTS" id="PR00111">
    <property type="entry name" value="ABHYDROLASE"/>
</dbReference>
<dbReference type="PRINTS" id="PR00412">
    <property type="entry name" value="EPOXHYDRLASE"/>
</dbReference>
<dbReference type="SUPFAM" id="SSF53474">
    <property type="entry name" value="alpha/beta-Hydrolases"/>
    <property type="match status" value="1"/>
</dbReference>
<name>DHMA_MYCPA</name>
<accession>Q73Y99</accession>
<proteinExistence type="inferred from homology"/>
<comment type="function">
    <text evidence="2">Catalyzes hydrolytic cleavage of carbon-halogen bonds in halogenated aliphatic compounds, leading to the formation of the corresponding primary alcohols, halide ions and protons.</text>
</comment>
<comment type="catalytic activity">
    <reaction evidence="2">
        <text>1-haloalkane + H2O = a halide anion + a primary alcohol + H(+)</text>
        <dbReference type="Rhea" id="RHEA:19081"/>
        <dbReference type="ChEBI" id="CHEBI:15377"/>
        <dbReference type="ChEBI" id="CHEBI:15378"/>
        <dbReference type="ChEBI" id="CHEBI:15734"/>
        <dbReference type="ChEBI" id="CHEBI:16042"/>
        <dbReference type="ChEBI" id="CHEBI:18060"/>
        <dbReference type="EC" id="3.8.1.5"/>
    </reaction>
</comment>
<comment type="subunit">
    <text evidence="2">Monomer.</text>
</comment>
<comment type="similarity">
    <text evidence="2">Belongs to the haloalkane dehalogenase family. Type 1 subfamily.</text>
</comment>
<evidence type="ECO:0000255" key="1"/>
<evidence type="ECO:0000255" key="2">
    <source>
        <dbReference type="HAMAP-Rule" id="MF_01230"/>
    </source>
</evidence>
<reference key="1">
    <citation type="journal article" date="2005" name="Proc. Natl. Acad. Sci. U.S.A.">
        <title>The complete genome sequence of Mycobacterium avium subspecies paratuberculosis.</title>
        <authorList>
            <person name="Li L."/>
            <person name="Bannantine J.P."/>
            <person name="Zhang Q."/>
            <person name="Amonsin A."/>
            <person name="May B.J."/>
            <person name="Alt D."/>
            <person name="Banerji N."/>
            <person name="Kanjilal S."/>
            <person name="Kapur V."/>
        </authorList>
    </citation>
    <scope>NUCLEOTIDE SEQUENCE [LARGE SCALE GENOMIC DNA]</scope>
    <source>
        <strain>ATCC BAA-968 / K-10</strain>
    </source>
</reference>
<protein>
    <recommendedName>
        <fullName evidence="2">Haloalkane dehalogenase</fullName>
        <ecNumber evidence="2">3.8.1.5</ecNumber>
    </recommendedName>
</protein>
<keyword id="KW-0378">Hydrolase</keyword>
<keyword id="KW-1185">Reference proteome</keyword>
<organism>
    <name type="scientific">Mycolicibacterium paratuberculosis (strain ATCC BAA-968 / K-10)</name>
    <name type="common">Mycobacterium paratuberculosis</name>
    <dbReference type="NCBI Taxonomy" id="262316"/>
    <lineage>
        <taxon>Bacteria</taxon>
        <taxon>Bacillati</taxon>
        <taxon>Actinomycetota</taxon>
        <taxon>Actinomycetes</taxon>
        <taxon>Mycobacteriales</taxon>
        <taxon>Mycobacteriaceae</taxon>
        <taxon>Mycobacterium</taxon>
        <taxon>Mycobacterium avium complex (MAC)</taxon>
    </lineage>
</organism>
<gene>
    <name evidence="2" type="primary">dhmA</name>
    <name type="ordered locus">MAP_2057</name>
</gene>
<feature type="chain" id="PRO_1000066841" description="Haloalkane dehalogenase">
    <location>
        <begin position="1"/>
        <end position="301"/>
    </location>
</feature>
<feature type="domain" description="AB hydrolase-1" evidence="1">
    <location>
        <begin position="47"/>
        <end position="284"/>
    </location>
</feature>
<feature type="active site" description="Nucleophile" evidence="2">
    <location>
        <position position="123"/>
    </location>
</feature>
<feature type="active site" description="Proton donor" evidence="2">
    <location>
        <position position="250"/>
    </location>
</feature>
<feature type="active site" description="Proton acceptor" evidence="2">
    <location>
        <position position="279"/>
    </location>
</feature>